<comment type="catalytic activity">
    <reaction>
        <text>a 2-oxocarboxylate + H(+) = an aldehyde + CO2</text>
        <dbReference type="Rhea" id="RHEA:11628"/>
        <dbReference type="ChEBI" id="CHEBI:15378"/>
        <dbReference type="ChEBI" id="CHEBI:16526"/>
        <dbReference type="ChEBI" id="CHEBI:17478"/>
        <dbReference type="ChEBI" id="CHEBI:35179"/>
        <dbReference type="EC" id="4.1.1.1"/>
    </reaction>
</comment>
<comment type="cofactor">
    <cofactor>
        <name>a metal cation</name>
        <dbReference type="ChEBI" id="CHEBI:25213"/>
    </cofactor>
    <text>Binds 1 metal ion per subunit.</text>
</comment>
<comment type="cofactor">
    <cofactor>
        <name>thiamine diphosphate</name>
        <dbReference type="ChEBI" id="CHEBI:58937"/>
    </cofactor>
    <text>Binds 1 thiamine pyrophosphate per subunit.</text>
</comment>
<comment type="subunit">
    <text evidence="1">Homotetramer.</text>
</comment>
<comment type="similarity">
    <text evidence="3">Belongs to the TPP enzyme family.</text>
</comment>
<proteinExistence type="evidence at protein level"/>
<evidence type="ECO:0000250" key="1"/>
<evidence type="ECO:0000269" key="2">
    <source>
    </source>
</evidence>
<evidence type="ECO:0000305" key="3"/>
<evidence type="ECO:0000312" key="4">
    <source>
        <dbReference type="PomBase" id="SPAC1F8.07c"/>
    </source>
</evidence>
<protein>
    <recommendedName>
        <fullName>Probable pyruvate decarboxylase Pdc101</fullName>
        <ecNumber>4.1.1.1</ecNumber>
    </recommendedName>
</protein>
<organism>
    <name type="scientific">Schizosaccharomyces pombe (strain 972 / ATCC 24843)</name>
    <name type="common">Fission yeast</name>
    <dbReference type="NCBI Taxonomy" id="284812"/>
    <lineage>
        <taxon>Eukaryota</taxon>
        <taxon>Fungi</taxon>
        <taxon>Dikarya</taxon>
        <taxon>Ascomycota</taxon>
        <taxon>Taphrinomycotina</taxon>
        <taxon>Schizosaccharomycetes</taxon>
        <taxon>Schizosaccharomycetales</taxon>
        <taxon>Schizosaccharomycetaceae</taxon>
        <taxon>Schizosaccharomyces</taxon>
    </lineage>
</organism>
<dbReference type="EC" id="4.1.1.1"/>
<dbReference type="EMBL" id="D89264">
    <property type="protein sequence ID" value="BAA13925.1"/>
    <property type="molecule type" value="mRNA"/>
</dbReference>
<dbReference type="EMBL" id="CU329670">
    <property type="protein sequence ID" value="CAK9837008.1"/>
    <property type="molecule type" value="Genomic_DNA"/>
</dbReference>
<dbReference type="PIR" id="T38114">
    <property type="entry name" value="T38114"/>
</dbReference>
<dbReference type="PIR" id="T43191">
    <property type="entry name" value="T43191"/>
</dbReference>
<dbReference type="RefSeq" id="NP_592796.3">
    <property type="nucleotide sequence ID" value="NM_001018196.3"/>
</dbReference>
<dbReference type="SMR" id="Q92345"/>
<dbReference type="FunCoup" id="Q92345">
    <property type="interactions" value="513"/>
</dbReference>
<dbReference type="IntAct" id="Q92345">
    <property type="interactions" value="5"/>
</dbReference>
<dbReference type="MINT" id="Q92345"/>
<dbReference type="STRING" id="284812.Q92345"/>
<dbReference type="iPTMnet" id="Q92345"/>
<dbReference type="PaxDb" id="4896-SPAC1F8.07c.1"/>
<dbReference type="GeneID" id="2541874"/>
<dbReference type="KEGG" id="spo:2541874"/>
<dbReference type="PomBase" id="SPAC1F8.07c"/>
<dbReference type="eggNOG" id="KOG1184">
    <property type="taxonomic scope" value="Eukaryota"/>
</dbReference>
<dbReference type="HOGENOM" id="CLU_013748_0_2_1"/>
<dbReference type="InParanoid" id="Q92345"/>
<dbReference type="CD-CODE" id="0808F6DD">
    <property type="entry name" value="P-body"/>
</dbReference>
<dbReference type="PRO" id="PR:Q92345"/>
<dbReference type="Proteomes" id="UP000002485">
    <property type="component" value="Chromosome I"/>
</dbReference>
<dbReference type="GO" id="GO:0005829">
    <property type="term" value="C:cytosol"/>
    <property type="evidence" value="ECO:0000318"/>
    <property type="project" value="GO_Central"/>
</dbReference>
<dbReference type="GO" id="GO:0000287">
    <property type="term" value="F:magnesium ion binding"/>
    <property type="evidence" value="ECO:0007669"/>
    <property type="project" value="InterPro"/>
</dbReference>
<dbReference type="GO" id="GO:0004737">
    <property type="term" value="F:pyruvate decarboxylase activity"/>
    <property type="evidence" value="ECO:0000318"/>
    <property type="project" value="GO_Central"/>
</dbReference>
<dbReference type="GO" id="GO:0030976">
    <property type="term" value="F:thiamine pyrophosphate binding"/>
    <property type="evidence" value="ECO:0007669"/>
    <property type="project" value="InterPro"/>
</dbReference>
<dbReference type="GO" id="GO:0000949">
    <property type="term" value="P:aromatic amino acid family catabolic process to alcohol via Ehrlich pathway"/>
    <property type="evidence" value="ECO:0000318"/>
    <property type="project" value="GO_Central"/>
</dbReference>
<dbReference type="GO" id="GO:0006113">
    <property type="term" value="P:fermentation"/>
    <property type="evidence" value="ECO:0000305"/>
    <property type="project" value="PomBase"/>
</dbReference>
<dbReference type="CDD" id="cd02005">
    <property type="entry name" value="TPP_PDC_IPDC"/>
    <property type="match status" value="1"/>
</dbReference>
<dbReference type="CDD" id="cd07038">
    <property type="entry name" value="TPP_PYR_PDC_IPDC_like"/>
    <property type="match status" value="1"/>
</dbReference>
<dbReference type="FunFam" id="3.40.50.1220:FF:000009">
    <property type="entry name" value="Pyruvate decarboxylase 1"/>
    <property type="match status" value="1"/>
</dbReference>
<dbReference type="FunFam" id="3.40.50.970:FF:000019">
    <property type="entry name" value="Pyruvate decarboxylase isozyme"/>
    <property type="match status" value="1"/>
</dbReference>
<dbReference type="FunFam" id="3.40.50.970:FF:000024">
    <property type="entry name" value="Pyruvate decarboxylase isozyme"/>
    <property type="match status" value="1"/>
</dbReference>
<dbReference type="Gene3D" id="3.40.50.970">
    <property type="match status" value="2"/>
</dbReference>
<dbReference type="Gene3D" id="3.40.50.1220">
    <property type="entry name" value="TPP-binding domain"/>
    <property type="match status" value="1"/>
</dbReference>
<dbReference type="InterPro" id="IPR029035">
    <property type="entry name" value="DHS-like_NAD/FAD-binding_dom"/>
</dbReference>
<dbReference type="InterPro" id="IPR012110">
    <property type="entry name" value="PDC/IPDC-like"/>
</dbReference>
<dbReference type="InterPro" id="IPR029061">
    <property type="entry name" value="THDP-binding"/>
</dbReference>
<dbReference type="InterPro" id="IPR012000">
    <property type="entry name" value="Thiamin_PyroP_enz_cen_dom"/>
</dbReference>
<dbReference type="InterPro" id="IPR012001">
    <property type="entry name" value="Thiamin_PyroP_enz_TPP-bd_dom"/>
</dbReference>
<dbReference type="InterPro" id="IPR000399">
    <property type="entry name" value="TPP-bd_CS"/>
</dbReference>
<dbReference type="InterPro" id="IPR011766">
    <property type="entry name" value="TPP_enzyme_TPP-bd"/>
</dbReference>
<dbReference type="InterPro" id="IPR047214">
    <property type="entry name" value="TPP_PDC_IPDC"/>
</dbReference>
<dbReference type="InterPro" id="IPR047213">
    <property type="entry name" value="TPP_PYR_PDC_IPDC-like"/>
</dbReference>
<dbReference type="PANTHER" id="PTHR43452">
    <property type="entry name" value="PYRUVATE DECARBOXYLASE"/>
    <property type="match status" value="1"/>
</dbReference>
<dbReference type="PANTHER" id="PTHR43452:SF1">
    <property type="entry name" value="PYRUVATE DECARBOXYLASE C186.09-RELATED"/>
    <property type="match status" value="1"/>
</dbReference>
<dbReference type="Pfam" id="PF02775">
    <property type="entry name" value="TPP_enzyme_C"/>
    <property type="match status" value="1"/>
</dbReference>
<dbReference type="Pfam" id="PF00205">
    <property type="entry name" value="TPP_enzyme_M"/>
    <property type="match status" value="1"/>
</dbReference>
<dbReference type="Pfam" id="PF02776">
    <property type="entry name" value="TPP_enzyme_N"/>
    <property type="match status" value="1"/>
</dbReference>
<dbReference type="PIRSF" id="PIRSF036565">
    <property type="entry name" value="Pyruvt_ip_decrb"/>
    <property type="match status" value="1"/>
</dbReference>
<dbReference type="SUPFAM" id="SSF52467">
    <property type="entry name" value="DHS-like NAD/FAD-binding domain"/>
    <property type="match status" value="1"/>
</dbReference>
<dbReference type="SUPFAM" id="SSF52518">
    <property type="entry name" value="Thiamin diphosphate-binding fold (THDP-binding)"/>
    <property type="match status" value="2"/>
</dbReference>
<dbReference type="PROSITE" id="PS00187">
    <property type="entry name" value="TPP_ENZYMES"/>
    <property type="match status" value="1"/>
</dbReference>
<accession>Q92345</accession>
<accession>A0AAN2L580</accession>
<accession>P78913</accession>
<sequence>MTKDAESTMTVGTYLAQRLVEIGIKNHFVVPGDYNLRLLDFLEYYPGLSEIGCCNELNCAFAAEGYARSNGIACAVVTYSVGALTAFDGIGGAYAENLPVILVSGSPNTNDLSSGHLLHHTLGTHDFEYQMEIAKKLTCAAVAIKRAEDAPVMIDHAIRQAILQHKPVYIEIPTNMANQPCPVPGPISAVISPEISDKESLEKATDIAAELISKKEKPILLAGPKLRAAGAESAFVKLAEALNCAAFIMPAAKGFYSEEHKNYAGVYWGEVSSSETTKAVYESSDLVIGAGVLFNDYSTVGWRAAPNPNILLNSDYTSVSIPGYVFSRVYMAEFLELLAKKVSKKPATLEAYNKARPQTVVPKAAEPKAALNRVEVMRQIQGLVDSNTTLYAETGDSWFNGLQMKLPAGAKFEVEMQWGHIGWSVPSAMGYAVAAPERRTIVMVGDGSFQLTGQEISQMIRHKLPVLIFLLNNRGYTIEIQIHDGPYNRIQNWDFAAFCESLNGETGKAKGLHAKTGEELTSAIKVALQNKEGPTLIECAIDTDDCTQELVDWGKAVASANARPPTADN</sequence>
<keyword id="KW-0210">Decarboxylase</keyword>
<keyword id="KW-0456">Lyase</keyword>
<keyword id="KW-0460">Magnesium</keyword>
<keyword id="KW-0479">Metal-binding</keyword>
<keyword id="KW-0597">Phosphoprotein</keyword>
<keyword id="KW-1185">Reference proteome</keyword>
<keyword id="KW-0786">Thiamine pyrophosphate</keyword>
<feature type="chain" id="PRO_0000090768" description="Probable pyruvate decarboxylase Pdc101">
    <location>
        <begin position="1"/>
        <end position="569"/>
    </location>
</feature>
<feature type="region of interest" description="Thiamine pyrophosphate binding">
    <location>
        <begin position="396"/>
        <end position="478"/>
    </location>
</feature>
<feature type="binding site" evidence="1">
    <location>
        <position position="33"/>
    </location>
    <ligand>
        <name>substrate</name>
    </ligand>
</feature>
<feature type="binding site" evidence="1">
    <location>
        <position position="120"/>
    </location>
    <ligand>
        <name>substrate</name>
    </ligand>
</feature>
<feature type="binding site" evidence="1">
    <location>
        <position position="446"/>
    </location>
    <ligand>
        <name>Mg(2+)</name>
        <dbReference type="ChEBI" id="CHEBI:18420"/>
    </ligand>
</feature>
<feature type="binding site" evidence="1">
    <location>
        <position position="473"/>
    </location>
    <ligand>
        <name>Mg(2+)</name>
        <dbReference type="ChEBI" id="CHEBI:18420"/>
    </ligand>
</feature>
<feature type="binding site" evidence="1">
    <location>
        <position position="475"/>
    </location>
    <ligand>
        <name>Mg(2+)</name>
        <dbReference type="ChEBI" id="CHEBI:18420"/>
    </ligand>
</feature>
<feature type="binding site" evidence="1">
    <location>
        <position position="479"/>
    </location>
    <ligand>
        <name>substrate</name>
    </ligand>
</feature>
<feature type="modified residue" description="Phosphoserine" evidence="2">
    <location>
        <position position="233"/>
    </location>
</feature>
<feature type="modified residue" description="Phosphothreonine" evidence="2">
    <location>
        <position position="521"/>
    </location>
</feature>
<feature type="modified residue" description="Phosphoserine" evidence="2">
    <location>
        <position position="522"/>
    </location>
</feature>
<feature type="sequence conflict" description="In Ref. 1; BAA13925." evidence="3" ref="1">
    <original>P</original>
    <variation>A</variation>
    <location>
        <position position="182"/>
    </location>
</feature>
<feature type="sequence conflict" description="In Ref. 1; BAA13925." evidence="3" ref="1">
    <original>A</original>
    <variation>T</variation>
    <location>
        <position position="347"/>
    </location>
</feature>
<feature type="sequence conflict" description="In Ref. 1; BAA13925." evidence="3" ref="1">
    <original>A</original>
    <variation>G</variation>
    <location>
        <position position="355"/>
    </location>
</feature>
<feature type="sequence conflict" description="In Ref. 1; BAA13925." evidence="3" ref="1">
    <original>P</original>
    <variation>S</variation>
    <location>
        <position position="362"/>
    </location>
</feature>
<feature type="sequence conflict" description="In Ref. 1; BAA13925." evidence="3" ref="1">
    <original>A</original>
    <variation>T</variation>
    <location>
        <position position="509"/>
    </location>
</feature>
<feature type="sequence conflict" description="In Ref. 1; BAA13925." evidence="3" ref="1">
    <original>P</original>
    <variation>S</variation>
    <location>
        <position position="534"/>
    </location>
</feature>
<feature type="sequence conflict" description="In Ref. 1; BAA13925." evidence="3" ref="1">
    <original>AIDTDDCTQELVDWGKAVASANARPPTADN</original>
    <variation>PIDEAACIQEWIAGYRTFTPRKIQLTFLDTQACMAAGLLSASEGTPYSES</variation>
    <location>
        <begin position="540"/>
        <end position="569"/>
    </location>
</feature>
<gene>
    <name type="primary">pdc101</name>
    <name evidence="4" type="ORF">SPAC1F8.07c</name>
</gene>
<reference key="1">
    <citation type="journal article" date="1997" name="DNA Res.">
        <title>Identification of open reading frames in Schizosaccharomyces pombe cDNAs.</title>
        <authorList>
            <person name="Yoshioka S."/>
            <person name="Kato K."/>
            <person name="Nakai K."/>
            <person name="Okayama H."/>
            <person name="Nojima H."/>
        </authorList>
    </citation>
    <scope>NUCLEOTIDE SEQUENCE [LARGE SCALE MRNA]</scope>
    <source>
        <strain>PR745</strain>
    </source>
</reference>
<reference key="2">
    <citation type="journal article" date="2002" name="Nature">
        <title>The genome sequence of Schizosaccharomyces pombe.</title>
        <authorList>
            <person name="Wood V."/>
            <person name="Gwilliam R."/>
            <person name="Rajandream M.A."/>
            <person name="Lyne M.H."/>
            <person name="Lyne R."/>
            <person name="Stewart A."/>
            <person name="Sgouros J.G."/>
            <person name="Peat N."/>
            <person name="Hayles J."/>
            <person name="Baker S.G."/>
            <person name="Basham D."/>
            <person name="Bowman S."/>
            <person name="Brooks K."/>
            <person name="Brown D."/>
            <person name="Brown S."/>
            <person name="Chillingworth T."/>
            <person name="Churcher C.M."/>
            <person name="Collins M."/>
            <person name="Connor R."/>
            <person name="Cronin A."/>
            <person name="Davis P."/>
            <person name="Feltwell T."/>
            <person name="Fraser A."/>
            <person name="Gentles S."/>
            <person name="Goble A."/>
            <person name="Hamlin N."/>
            <person name="Harris D.E."/>
            <person name="Hidalgo J."/>
            <person name="Hodgson G."/>
            <person name="Holroyd S."/>
            <person name="Hornsby T."/>
            <person name="Howarth S."/>
            <person name="Huckle E.J."/>
            <person name="Hunt S."/>
            <person name="Jagels K."/>
            <person name="James K.D."/>
            <person name="Jones L."/>
            <person name="Jones M."/>
            <person name="Leather S."/>
            <person name="McDonald S."/>
            <person name="McLean J."/>
            <person name="Mooney P."/>
            <person name="Moule S."/>
            <person name="Mungall K.L."/>
            <person name="Murphy L.D."/>
            <person name="Niblett D."/>
            <person name="Odell C."/>
            <person name="Oliver K."/>
            <person name="O'Neil S."/>
            <person name="Pearson D."/>
            <person name="Quail M.A."/>
            <person name="Rabbinowitsch E."/>
            <person name="Rutherford K.M."/>
            <person name="Rutter S."/>
            <person name="Saunders D."/>
            <person name="Seeger K."/>
            <person name="Sharp S."/>
            <person name="Skelton J."/>
            <person name="Simmonds M.N."/>
            <person name="Squares R."/>
            <person name="Squares S."/>
            <person name="Stevens K."/>
            <person name="Taylor K."/>
            <person name="Taylor R.G."/>
            <person name="Tivey A."/>
            <person name="Walsh S.V."/>
            <person name="Warren T."/>
            <person name="Whitehead S."/>
            <person name="Woodward J.R."/>
            <person name="Volckaert G."/>
            <person name="Aert R."/>
            <person name="Robben J."/>
            <person name="Grymonprez B."/>
            <person name="Weltjens I."/>
            <person name="Vanstreels E."/>
            <person name="Rieger M."/>
            <person name="Schaefer M."/>
            <person name="Mueller-Auer S."/>
            <person name="Gabel C."/>
            <person name="Fuchs M."/>
            <person name="Duesterhoeft A."/>
            <person name="Fritzc C."/>
            <person name="Holzer E."/>
            <person name="Moestl D."/>
            <person name="Hilbert H."/>
            <person name="Borzym K."/>
            <person name="Langer I."/>
            <person name="Beck A."/>
            <person name="Lehrach H."/>
            <person name="Reinhardt R."/>
            <person name="Pohl T.M."/>
            <person name="Eger P."/>
            <person name="Zimmermann W."/>
            <person name="Wedler H."/>
            <person name="Wambutt R."/>
            <person name="Purnelle B."/>
            <person name="Goffeau A."/>
            <person name="Cadieu E."/>
            <person name="Dreano S."/>
            <person name="Gloux S."/>
            <person name="Lelaure V."/>
            <person name="Mottier S."/>
            <person name="Galibert F."/>
            <person name="Aves S.J."/>
            <person name="Xiang Z."/>
            <person name="Hunt C."/>
            <person name="Moore K."/>
            <person name="Hurst S.M."/>
            <person name="Lucas M."/>
            <person name="Rochet M."/>
            <person name="Gaillardin C."/>
            <person name="Tallada V.A."/>
            <person name="Garzon A."/>
            <person name="Thode G."/>
            <person name="Daga R.R."/>
            <person name="Cruzado L."/>
            <person name="Jimenez J."/>
            <person name="Sanchez M."/>
            <person name="del Rey F."/>
            <person name="Benito J."/>
            <person name="Dominguez A."/>
            <person name="Revuelta J.L."/>
            <person name="Moreno S."/>
            <person name="Armstrong J."/>
            <person name="Forsburg S.L."/>
            <person name="Cerutti L."/>
            <person name="Lowe T."/>
            <person name="McCombie W.R."/>
            <person name="Paulsen I."/>
            <person name="Potashkin J."/>
            <person name="Shpakovski G.V."/>
            <person name="Ussery D."/>
            <person name="Barrell B.G."/>
            <person name="Nurse P."/>
        </authorList>
    </citation>
    <scope>NUCLEOTIDE SEQUENCE [LARGE SCALE GENOMIC DNA]</scope>
    <source>
        <strain>972 / ATCC 24843</strain>
    </source>
</reference>
<reference key="3">
    <citation type="journal article" date="2006" name="Nat. Biotechnol.">
        <title>ORFeome cloning and global analysis of protein localization in the fission yeast Schizosaccharomyces pombe.</title>
        <authorList>
            <person name="Matsuyama A."/>
            <person name="Arai R."/>
            <person name="Yashiroda Y."/>
            <person name="Shirai A."/>
            <person name="Kamata A."/>
            <person name="Sekido S."/>
            <person name="Kobayashi Y."/>
            <person name="Hashimoto A."/>
            <person name="Hamamoto M."/>
            <person name="Hiraoka Y."/>
            <person name="Horinouchi S."/>
            <person name="Yoshida M."/>
        </authorList>
    </citation>
    <scope>IDENTIFICATION OF FRAMESHIFT</scope>
    <source>
        <strain>972 / ATCC 24843</strain>
        <strain>JY3</strain>
    </source>
</reference>
<reference key="4">
    <citation type="journal article" date="2008" name="J. Proteome Res.">
        <title>Phosphoproteome analysis of fission yeast.</title>
        <authorList>
            <person name="Wilson-Grady J.T."/>
            <person name="Villen J."/>
            <person name="Gygi S.P."/>
        </authorList>
    </citation>
    <scope>PHOSPHORYLATION [LARGE SCALE ANALYSIS] AT SER-233; THR-521 AND SER-522</scope>
    <scope>IDENTIFICATION BY MASS SPECTROMETRY</scope>
</reference>
<name>PDC2_SCHPO</name>